<proteinExistence type="inferred from homology"/>
<feature type="chain" id="PRO_0000308047" description="Large ribosomal subunit protein uL1">
    <location>
        <begin position="1"/>
        <end position="230"/>
    </location>
</feature>
<gene>
    <name evidence="1" type="primary">rplA</name>
    <name type="ordered locus">Mfla_0269</name>
</gene>
<name>RL1_METFK</name>
<protein>
    <recommendedName>
        <fullName evidence="1">Large ribosomal subunit protein uL1</fullName>
    </recommendedName>
    <alternativeName>
        <fullName evidence="2">50S ribosomal protein L1</fullName>
    </alternativeName>
</protein>
<evidence type="ECO:0000255" key="1">
    <source>
        <dbReference type="HAMAP-Rule" id="MF_01318"/>
    </source>
</evidence>
<evidence type="ECO:0000305" key="2"/>
<organism>
    <name type="scientific">Methylobacillus flagellatus (strain ATCC 51484 / DSM 6875 / VKM B-1610 / KT)</name>
    <dbReference type="NCBI Taxonomy" id="265072"/>
    <lineage>
        <taxon>Bacteria</taxon>
        <taxon>Pseudomonadati</taxon>
        <taxon>Pseudomonadota</taxon>
        <taxon>Betaproteobacteria</taxon>
        <taxon>Nitrosomonadales</taxon>
        <taxon>Methylophilaceae</taxon>
        <taxon>Methylobacillus</taxon>
    </lineage>
</organism>
<sequence length="230" mass="23833">MANVSKRIKALRAKVDRNKVYPVTEALALVKETATAKFDESVDAVINLGIDARKSDQLVRGALVLPHGTGKTKRVAVFAQGAAAEAAKAAGADIVGFEDLAEQVKGGMLDFDVAIATPDAMRIVGALGQVLGPRGLMPNPKVGTVTPDVATAVKNAKAGQVQYRTDKGGIVHCTIGRASFEVDALKENLAALVDALNKAKPASSKGVYLKKVSVSSTMGAGVRVDQSNLA</sequence>
<comment type="function">
    <text evidence="1">Binds directly to 23S rRNA. The L1 stalk is quite mobile in the ribosome, and is involved in E site tRNA release.</text>
</comment>
<comment type="function">
    <text evidence="1">Protein L1 is also a translational repressor protein, it controls the translation of the L11 operon by binding to its mRNA.</text>
</comment>
<comment type="subunit">
    <text evidence="1">Part of the 50S ribosomal subunit.</text>
</comment>
<comment type="similarity">
    <text evidence="1">Belongs to the universal ribosomal protein uL1 family.</text>
</comment>
<dbReference type="EMBL" id="CP000284">
    <property type="protein sequence ID" value="ABE48540.1"/>
    <property type="molecule type" value="Genomic_DNA"/>
</dbReference>
<dbReference type="RefSeq" id="WP_011478637.1">
    <property type="nucleotide sequence ID" value="NC_007947.1"/>
</dbReference>
<dbReference type="SMR" id="Q1H4P7"/>
<dbReference type="STRING" id="265072.Mfla_0269"/>
<dbReference type="KEGG" id="mfa:Mfla_0269"/>
<dbReference type="eggNOG" id="COG0081">
    <property type="taxonomic scope" value="Bacteria"/>
</dbReference>
<dbReference type="HOGENOM" id="CLU_062853_0_0_4"/>
<dbReference type="OrthoDB" id="9803740at2"/>
<dbReference type="Proteomes" id="UP000002440">
    <property type="component" value="Chromosome"/>
</dbReference>
<dbReference type="GO" id="GO:0022625">
    <property type="term" value="C:cytosolic large ribosomal subunit"/>
    <property type="evidence" value="ECO:0007669"/>
    <property type="project" value="TreeGrafter"/>
</dbReference>
<dbReference type="GO" id="GO:0019843">
    <property type="term" value="F:rRNA binding"/>
    <property type="evidence" value="ECO:0007669"/>
    <property type="project" value="UniProtKB-UniRule"/>
</dbReference>
<dbReference type="GO" id="GO:0003735">
    <property type="term" value="F:structural constituent of ribosome"/>
    <property type="evidence" value="ECO:0007669"/>
    <property type="project" value="InterPro"/>
</dbReference>
<dbReference type="GO" id="GO:0000049">
    <property type="term" value="F:tRNA binding"/>
    <property type="evidence" value="ECO:0007669"/>
    <property type="project" value="UniProtKB-KW"/>
</dbReference>
<dbReference type="GO" id="GO:0006417">
    <property type="term" value="P:regulation of translation"/>
    <property type="evidence" value="ECO:0007669"/>
    <property type="project" value="UniProtKB-KW"/>
</dbReference>
<dbReference type="GO" id="GO:0006412">
    <property type="term" value="P:translation"/>
    <property type="evidence" value="ECO:0007669"/>
    <property type="project" value="UniProtKB-UniRule"/>
</dbReference>
<dbReference type="CDD" id="cd00403">
    <property type="entry name" value="Ribosomal_L1"/>
    <property type="match status" value="1"/>
</dbReference>
<dbReference type="FunFam" id="3.40.50.790:FF:000001">
    <property type="entry name" value="50S ribosomal protein L1"/>
    <property type="match status" value="1"/>
</dbReference>
<dbReference type="Gene3D" id="3.30.190.20">
    <property type="match status" value="1"/>
</dbReference>
<dbReference type="Gene3D" id="3.40.50.790">
    <property type="match status" value="1"/>
</dbReference>
<dbReference type="HAMAP" id="MF_01318_B">
    <property type="entry name" value="Ribosomal_uL1_B"/>
    <property type="match status" value="1"/>
</dbReference>
<dbReference type="InterPro" id="IPR005878">
    <property type="entry name" value="Ribosom_uL1_bac-type"/>
</dbReference>
<dbReference type="InterPro" id="IPR002143">
    <property type="entry name" value="Ribosomal_uL1"/>
</dbReference>
<dbReference type="InterPro" id="IPR023674">
    <property type="entry name" value="Ribosomal_uL1-like"/>
</dbReference>
<dbReference type="InterPro" id="IPR028364">
    <property type="entry name" value="Ribosomal_uL1/biogenesis"/>
</dbReference>
<dbReference type="InterPro" id="IPR016095">
    <property type="entry name" value="Ribosomal_uL1_3-a/b-sand"/>
</dbReference>
<dbReference type="InterPro" id="IPR023673">
    <property type="entry name" value="Ribosomal_uL1_CS"/>
</dbReference>
<dbReference type="NCBIfam" id="TIGR01169">
    <property type="entry name" value="rplA_bact"/>
    <property type="match status" value="1"/>
</dbReference>
<dbReference type="PANTHER" id="PTHR36427">
    <property type="entry name" value="54S RIBOSOMAL PROTEIN L1, MITOCHONDRIAL"/>
    <property type="match status" value="1"/>
</dbReference>
<dbReference type="PANTHER" id="PTHR36427:SF3">
    <property type="entry name" value="LARGE RIBOSOMAL SUBUNIT PROTEIN UL1M"/>
    <property type="match status" value="1"/>
</dbReference>
<dbReference type="Pfam" id="PF00687">
    <property type="entry name" value="Ribosomal_L1"/>
    <property type="match status" value="1"/>
</dbReference>
<dbReference type="PIRSF" id="PIRSF002155">
    <property type="entry name" value="Ribosomal_L1"/>
    <property type="match status" value="1"/>
</dbReference>
<dbReference type="SUPFAM" id="SSF56808">
    <property type="entry name" value="Ribosomal protein L1"/>
    <property type="match status" value="1"/>
</dbReference>
<dbReference type="PROSITE" id="PS01199">
    <property type="entry name" value="RIBOSOMAL_L1"/>
    <property type="match status" value="1"/>
</dbReference>
<keyword id="KW-1185">Reference proteome</keyword>
<keyword id="KW-0678">Repressor</keyword>
<keyword id="KW-0687">Ribonucleoprotein</keyword>
<keyword id="KW-0689">Ribosomal protein</keyword>
<keyword id="KW-0694">RNA-binding</keyword>
<keyword id="KW-0699">rRNA-binding</keyword>
<keyword id="KW-0810">Translation regulation</keyword>
<keyword id="KW-0820">tRNA-binding</keyword>
<reference key="1">
    <citation type="submission" date="2006-03" db="EMBL/GenBank/DDBJ databases">
        <title>Complete sequence of Methylobacillus flagellatus KT.</title>
        <authorList>
            <consortium name="US DOE Joint Genome Institute"/>
            <person name="Copeland A."/>
            <person name="Lucas S."/>
            <person name="Lapidus A."/>
            <person name="Barry K."/>
            <person name="Detter J.C."/>
            <person name="Glavina del Rio T."/>
            <person name="Hammon N."/>
            <person name="Israni S."/>
            <person name="Dalin E."/>
            <person name="Tice H."/>
            <person name="Pitluck S."/>
            <person name="Brettin T."/>
            <person name="Bruce D."/>
            <person name="Han C."/>
            <person name="Tapia R."/>
            <person name="Saunders E."/>
            <person name="Gilna P."/>
            <person name="Schmutz J."/>
            <person name="Larimer F."/>
            <person name="Land M."/>
            <person name="Kyrpides N."/>
            <person name="Anderson I."/>
            <person name="Richardson P."/>
        </authorList>
    </citation>
    <scope>NUCLEOTIDE SEQUENCE [LARGE SCALE GENOMIC DNA]</scope>
    <source>
        <strain>ATCC 51484 / DSM 6875 / VKM B-1610 / KT</strain>
    </source>
</reference>
<accession>Q1H4P7</accession>